<feature type="chain" id="PRO_0000066239" description="Uncharacterized 33.9 kDa protein in glnA 5'region">
    <location>
        <begin position="1"/>
        <end position="306"/>
    </location>
</feature>
<proteinExistence type="predicted"/>
<comment type="similarity">
    <text evidence="1">To L.delbrueckii similar ORF in glnA 5'region.</text>
</comment>
<accession>P45624</accession>
<sequence length="306" mass="33926">MPYDTMQQVIGLAPKKRGTLIQKGINFSYVPLNEEGGVDYEEAEKVLKRDQPHIVVIQRSRGYDTRQSYTVDQIKKMTAFVKKVSPESLVFVDNCYGEFSEKHEPTEYGVDFTAGSLIKNAGGGIAQTGGYIVGKEELVENAAIRLTAPGIGKEEGATLTNMHEFYEGFFLAPHTTGEAIKGMIFSAALLEKMGCEVTPKWHEPRTDLIQTIIFNVPEKMINFTKEVQKNSPIDSFVEPIPSDMPGYEDKVIMAAGNFVSGSTMEFSADGPIRPPYALYMQCGLTYAHDRIAVTNAVNHLFFKENG</sequence>
<organism>
    <name type="scientific">Lactobacillus delbrueckii subsp. bulgaricus</name>
    <dbReference type="NCBI Taxonomy" id="1585"/>
    <lineage>
        <taxon>Bacteria</taxon>
        <taxon>Bacillati</taxon>
        <taxon>Bacillota</taxon>
        <taxon>Bacilli</taxon>
        <taxon>Lactobacillales</taxon>
        <taxon>Lactobacillaceae</taxon>
        <taxon>Lactobacillus</taxon>
    </lineage>
</organism>
<reference key="1">
    <citation type="journal article" date="1992" name="Appl. Environ. Microbiol.">
        <title>Organization and nucleotide sequence of the glutamine synthetase (glnA) gene from Lactobacillus delbrueckii subsp. bulgaricus.</title>
        <authorList>
            <person name="Ishino Y."/>
            <person name="Morgenthaler P."/>
            <person name="Hottinger H."/>
            <person name="Soell D."/>
        </authorList>
    </citation>
    <scope>NUCLEOTIDE SEQUENCE [GENOMIC DNA]</scope>
</reference>
<dbReference type="EMBL" id="D10020">
    <property type="protein sequence ID" value="BAA00909.1"/>
    <property type="molecule type" value="Genomic_DNA"/>
</dbReference>
<dbReference type="SMR" id="P45624"/>
<dbReference type="Gene3D" id="3.90.1150.60">
    <property type="entry name" value="Methioning gamme-lyase, C-terminal domain"/>
    <property type="match status" value="1"/>
</dbReference>
<dbReference type="Gene3D" id="3.40.640.10">
    <property type="entry name" value="Type I PLP-dependent aspartate aminotransferase-like (Major domain)"/>
    <property type="match status" value="1"/>
</dbReference>
<dbReference type="InterPro" id="IPR009651">
    <property type="entry name" value="Met_g_lyase_put"/>
</dbReference>
<dbReference type="InterPro" id="IPR015424">
    <property type="entry name" value="PyrdxlP-dep_Trfase"/>
</dbReference>
<dbReference type="InterPro" id="IPR015421">
    <property type="entry name" value="PyrdxlP-dep_Trfase_major"/>
</dbReference>
<dbReference type="PANTHER" id="PTHR46658">
    <property type="entry name" value="CYS OR MET METABOLISM PYRIDOXAL-PHOSPHATE-DEPENDENT ENZYME"/>
    <property type="match status" value="1"/>
</dbReference>
<dbReference type="PANTHER" id="PTHR46658:SF1">
    <property type="entry name" value="CYS OR MET METABOLISM PYRIDOXAL-PHOSPHATE-DEPENDENT ENZYME"/>
    <property type="match status" value="1"/>
</dbReference>
<dbReference type="Pfam" id="PF06838">
    <property type="entry name" value="Met_gamma_lyase"/>
    <property type="match status" value="1"/>
</dbReference>
<dbReference type="SUPFAM" id="SSF53383">
    <property type="entry name" value="PLP-dependent transferases"/>
    <property type="match status" value="1"/>
</dbReference>
<protein>
    <recommendedName>
        <fullName>Uncharacterized 33.9 kDa protein in glnA 5'region</fullName>
    </recommendedName>
    <alternativeName>
        <fullName>ORF306</fullName>
    </alternativeName>
</protein>
<name>YGLN_LACDE</name>
<evidence type="ECO:0000305" key="1"/>